<sequence length="211" mass="23419">MRLLDSKGVHAVFEQLHAANPQPQGELHWRNTFTLLVAVLLSAQATDKSVNKATAALFDVADTPQAMLALGEERLCSYIRTINLYPTKARRIIALSAELIERFAAQVPCDAHALESLPGVGHKTANVVLNMGFGIPTIAVDTHILRTAPRIGLSSGRTPRAVERDLLVVTPREFRMHAHHWILLHGRYTCTARRPRCTECCLRDLCCKNNI</sequence>
<name>END3_TREPA</name>
<reference key="1">
    <citation type="journal article" date="1998" name="Science">
        <title>Complete genome sequence of Treponema pallidum, the syphilis spirochete.</title>
        <authorList>
            <person name="Fraser C.M."/>
            <person name="Norris S.J."/>
            <person name="Weinstock G.M."/>
            <person name="White O."/>
            <person name="Sutton G.G."/>
            <person name="Dodson R.J."/>
            <person name="Gwinn M.L."/>
            <person name="Hickey E.K."/>
            <person name="Clayton R.A."/>
            <person name="Ketchum K.A."/>
            <person name="Sodergren E."/>
            <person name="Hardham J.M."/>
            <person name="McLeod M.P."/>
            <person name="Salzberg S.L."/>
            <person name="Peterson J.D."/>
            <person name="Khalak H.G."/>
            <person name="Richardson D.L."/>
            <person name="Howell J.K."/>
            <person name="Chidambaram M."/>
            <person name="Utterback T.R."/>
            <person name="McDonald L.A."/>
            <person name="Artiach P."/>
            <person name="Bowman C."/>
            <person name="Cotton M.D."/>
            <person name="Fujii C."/>
            <person name="Garland S.A."/>
            <person name="Hatch B."/>
            <person name="Horst K."/>
            <person name="Roberts K.M."/>
            <person name="Sandusky M."/>
            <person name="Weidman J.F."/>
            <person name="Smith H.O."/>
            <person name="Venter J.C."/>
        </authorList>
    </citation>
    <scope>NUCLEOTIDE SEQUENCE [LARGE SCALE GENOMIC DNA]</scope>
    <source>
        <strain>Nichols</strain>
    </source>
</reference>
<organism>
    <name type="scientific">Treponema pallidum (strain Nichols)</name>
    <dbReference type="NCBI Taxonomy" id="243276"/>
    <lineage>
        <taxon>Bacteria</taxon>
        <taxon>Pseudomonadati</taxon>
        <taxon>Spirochaetota</taxon>
        <taxon>Spirochaetia</taxon>
        <taxon>Spirochaetales</taxon>
        <taxon>Treponemataceae</taxon>
        <taxon>Treponema</taxon>
    </lineage>
</organism>
<protein>
    <recommendedName>
        <fullName evidence="1">Endonuclease III</fullName>
        <ecNumber evidence="1">4.2.99.18</ecNumber>
    </recommendedName>
    <alternativeName>
        <fullName evidence="1">DNA-(apurinic or apyrimidinic site) lyase</fullName>
    </alternativeName>
</protein>
<keyword id="KW-0004">4Fe-4S</keyword>
<keyword id="KW-0227">DNA damage</keyword>
<keyword id="KW-0234">DNA repair</keyword>
<keyword id="KW-0238">DNA-binding</keyword>
<keyword id="KW-0326">Glycosidase</keyword>
<keyword id="KW-0378">Hydrolase</keyword>
<keyword id="KW-0408">Iron</keyword>
<keyword id="KW-0411">Iron-sulfur</keyword>
<keyword id="KW-0456">Lyase</keyword>
<keyword id="KW-0479">Metal-binding</keyword>
<keyword id="KW-1185">Reference proteome</keyword>
<accession>O83754</accession>
<evidence type="ECO:0000255" key="1">
    <source>
        <dbReference type="HAMAP-Rule" id="MF_00942"/>
    </source>
</evidence>
<proteinExistence type="inferred from homology"/>
<comment type="function">
    <text evidence="1">DNA repair enzyme that has both DNA N-glycosylase activity and AP-lyase activity. The DNA N-glycosylase activity releases various damaged pyrimidines from DNA by cleaving the N-glycosidic bond, leaving an AP (apurinic/apyrimidinic) site. The AP-lyase activity cleaves the phosphodiester bond 3' to the AP site by a beta-elimination, leaving a 3'-terminal unsaturated sugar and a product with a terminal 5'-phosphate.</text>
</comment>
<comment type="catalytic activity">
    <reaction evidence="1">
        <text>2'-deoxyribonucleotide-(2'-deoxyribose 5'-phosphate)-2'-deoxyribonucleotide-DNA = a 3'-end 2'-deoxyribonucleotide-(2,3-dehydro-2,3-deoxyribose 5'-phosphate)-DNA + a 5'-end 5'-phospho-2'-deoxyribonucleoside-DNA + H(+)</text>
        <dbReference type="Rhea" id="RHEA:66592"/>
        <dbReference type="Rhea" id="RHEA-COMP:13180"/>
        <dbReference type="Rhea" id="RHEA-COMP:16897"/>
        <dbReference type="Rhea" id="RHEA-COMP:17067"/>
        <dbReference type="ChEBI" id="CHEBI:15378"/>
        <dbReference type="ChEBI" id="CHEBI:136412"/>
        <dbReference type="ChEBI" id="CHEBI:157695"/>
        <dbReference type="ChEBI" id="CHEBI:167181"/>
        <dbReference type="EC" id="4.2.99.18"/>
    </reaction>
</comment>
<comment type="cofactor">
    <cofactor evidence="1">
        <name>[4Fe-4S] cluster</name>
        <dbReference type="ChEBI" id="CHEBI:49883"/>
    </cofactor>
    <text evidence="1">Binds 1 [4Fe-4S] cluster.</text>
</comment>
<comment type="similarity">
    <text evidence="1">Belongs to the Nth/MutY family.</text>
</comment>
<gene>
    <name evidence="1" type="primary">nth</name>
    <name type="ordered locus">TP_0775</name>
</gene>
<dbReference type="EC" id="4.2.99.18" evidence="1"/>
<dbReference type="EMBL" id="AE000520">
    <property type="protein sequence ID" value="AAC65744.1"/>
    <property type="molecule type" value="Genomic_DNA"/>
</dbReference>
<dbReference type="PIR" id="H71281">
    <property type="entry name" value="H71281"/>
</dbReference>
<dbReference type="RefSeq" id="WP_010882220.1">
    <property type="nucleotide sequence ID" value="NC_021490.2"/>
</dbReference>
<dbReference type="SMR" id="O83754"/>
<dbReference type="STRING" id="243276.TP_0775"/>
<dbReference type="EnsemblBacteria" id="AAC65744">
    <property type="protein sequence ID" value="AAC65744"/>
    <property type="gene ID" value="TP_0775"/>
</dbReference>
<dbReference type="GeneID" id="93876541"/>
<dbReference type="KEGG" id="tpa:TP_0775"/>
<dbReference type="KEGG" id="tpw:TPANIC_0775"/>
<dbReference type="eggNOG" id="COG0177">
    <property type="taxonomic scope" value="Bacteria"/>
</dbReference>
<dbReference type="HOGENOM" id="CLU_012862_3_0_12"/>
<dbReference type="OrthoDB" id="9800977at2"/>
<dbReference type="Proteomes" id="UP000000811">
    <property type="component" value="Chromosome"/>
</dbReference>
<dbReference type="GO" id="GO:0051539">
    <property type="term" value="F:4 iron, 4 sulfur cluster binding"/>
    <property type="evidence" value="ECO:0007669"/>
    <property type="project" value="UniProtKB-KW"/>
</dbReference>
<dbReference type="GO" id="GO:0140078">
    <property type="term" value="F:class I DNA-(apurinic or apyrimidinic site) endonuclease activity"/>
    <property type="evidence" value="ECO:0007669"/>
    <property type="project" value="UniProtKB-EC"/>
</dbReference>
<dbReference type="GO" id="GO:0003677">
    <property type="term" value="F:DNA binding"/>
    <property type="evidence" value="ECO:0007669"/>
    <property type="project" value="UniProtKB-UniRule"/>
</dbReference>
<dbReference type="GO" id="GO:0019104">
    <property type="term" value="F:DNA N-glycosylase activity"/>
    <property type="evidence" value="ECO:0007669"/>
    <property type="project" value="UniProtKB-UniRule"/>
</dbReference>
<dbReference type="GO" id="GO:0046872">
    <property type="term" value="F:metal ion binding"/>
    <property type="evidence" value="ECO:0007669"/>
    <property type="project" value="UniProtKB-KW"/>
</dbReference>
<dbReference type="GO" id="GO:0006285">
    <property type="term" value="P:base-excision repair, AP site formation"/>
    <property type="evidence" value="ECO:0007669"/>
    <property type="project" value="TreeGrafter"/>
</dbReference>
<dbReference type="CDD" id="cd00056">
    <property type="entry name" value="ENDO3c"/>
    <property type="match status" value="1"/>
</dbReference>
<dbReference type="FunFam" id="1.10.1670.10:FF:000001">
    <property type="entry name" value="Endonuclease III"/>
    <property type="match status" value="1"/>
</dbReference>
<dbReference type="FunFam" id="1.10.340.30:FF:000001">
    <property type="entry name" value="Endonuclease III"/>
    <property type="match status" value="1"/>
</dbReference>
<dbReference type="Gene3D" id="1.10.1670.10">
    <property type="entry name" value="Helix-hairpin-Helix base-excision DNA repair enzymes (C-terminal)"/>
    <property type="match status" value="1"/>
</dbReference>
<dbReference type="Gene3D" id="1.10.340.30">
    <property type="entry name" value="Hypothetical protein, domain 2"/>
    <property type="match status" value="1"/>
</dbReference>
<dbReference type="HAMAP" id="MF_00942">
    <property type="entry name" value="Nth"/>
    <property type="match status" value="1"/>
</dbReference>
<dbReference type="InterPro" id="IPR011257">
    <property type="entry name" value="DNA_glycosylase"/>
</dbReference>
<dbReference type="InterPro" id="IPR004036">
    <property type="entry name" value="Endonuclease-III-like_CS2"/>
</dbReference>
<dbReference type="InterPro" id="IPR003651">
    <property type="entry name" value="Endonuclease3_FeS-loop_motif"/>
</dbReference>
<dbReference type="InterPro" id="IPR004035">
    <property type="entry name" value="Endouclease-III_FeS-bd_BS"/>
</dbReference>
<dbReference type="InterPro" id="IPR003265">
    <property type="entry name" value="HhH-GPD_domain"/>
</dbReference>
<dbReference type="InterPro" id="IPR023170">
    <property type="entry name" value="HhH_base_excis_C"/>
</dbReference>
<dbReference type="InterPro" id="IPR005759">
    <property type="entry name" value="Nth"/>
</dbReference>
<dbReference type="NCBIfam" id="TIGR01083">
    <property type="entry name" value="nth"/>
    <property type="match status" value="1"/>
</dbReference>
<dbReference type="PANTHER" id="PTHR10359">
    <property type="entry name" value="A/G-SPECIFIC ADENINE GLYCOSYLASE/ENDONUCLEASE III"/>
    <property type="match status" value="1"/>
</dbReference>
<dbReference type="PANTHER" id="PTHR10359:SF18">
    <property type="entry name" value="ENDONUCLEASE III"/>
    <property type="match status" value="1"/>
</dbReference>
<dbReference type="Pfam" id="PF10576">
    <property type="entry name" value="EndIII_4Fe-2S"/>
    <property type="match status" value="1"/>
</dbReference>
<dbReference type="Pfam" id="PF00730">
    <property type="entry name" value="HhH-GPD"/>
    <property type="match status" value="1"/>
</dbReference>
<dbReference type="PIRSF" id="PIRSF001435">
    <property type="entry name" value="Nth"/>
    <property type="match status" value="1"/>
</dbReference>
<dbReference type="SMART" id="SM00478">
    <property type="entry name" value="ENDO3c"/>
    <property type="match status" value="1"/>
</dbReference>
<dbReference type="SMART" id="SM00525">
    <property type="entry name" value="FES"/>
    <property type="match status" value="1"/>
</dbReference>
<dbReference type="SUPFAM" id="SSF48150">
    <property type="entry name" value="DNA-glycosylase"/>
    <property type="match status" value="1"/>
</dbReference>
<dbReference type="PROSITE" id="PS00764">
    <property type="entry name" value="ENDONUCLEASE_III_1"/>
    <property type="match status" value="1"/>
</dbReference>
<dbReference type="PROSITE" id="PS01155">
    <property type="entry name" value="ENDONUCLEASE_III_2"/>
    <property type="match status" value="1"/>
</dbReference>
<feature type="chain" id="PRO_0000102225" description="Endonuclease III">
    <location>
        <begin position="1"/>
        <end position="211"/>
    </location>
</feature>
<feature type="domain" description="HhH" evidence="1">
    <location>
        <begin position="111"/>
        <end position="130"/>
    </location>
</feature>
<feature type="binding site" evidence="1">
    <location>
        <position position="190"/>
    </location>
    <ligand>
        <name>[4Fe-4S] cluster</name>
        <dbReference type="ChEBI" id="CHEBI:49883"/>
    </ligand>
</feature>
<feature type="binding site" evidence="1">
    <location>
        <position position="197"/>
    </location>
    <ligand>
        <name>[4Fe-4S] cluster</name>
        <dbReference type="ChEBI" id="CHEBI:49883"/>
    </ligand>
</feature>
<feature type="binding site" evidence="1">
    <location>
        <position position="200"/>
    </location>
    <ligand>
        <name>[4Fe-4S] cluster</name>
        <dbReference type="ChEBI" id="CHEBI:49883"/>
    </ligand>
</feature>
<feature type="binding site" evidence="1">
    <location>
        <position position="206"/>
    </location>
    <ligand>
        <name>[4Fe-4S] cluster</name>
        <dbReference type="ChEBI" id="CHEBI:49883"/>
    </ligand>
</feature>